<gene>
    <name evidence="1" type="primary">fucI</name>
    <name type="ordered locus">CKO_04161</name>
</gene>
<comment type="function">
    <text evidence="1">Converts the aldose L-fucose into the corresponding ketose L-fuculose.</text>
</comment>
<comment type="catalytic activity">
    <reaction evidence="1">
        <text>L-fucose = L-fuculose</text>
        <dbReference type="Rhea" id="RHEA:17233"/>
        <dbReference type="ChEBI" id="CHEBI:2181"/>
        <dbReference type="ChEBI" id="CHEBI:17617"/>
        <dbReference type="EC" id="5.3.1.25"/>
    </reaction>
</comment>
<comment type="cofactor">
    <cofactor evidence="1">
        <name>Mn(2+)</name>
        <dbReference type="ChEBI" id="CHEBI:29035"/>
    </cofactor>
</comment>
<comment type="pathway">
    <text evidence="1">Carbohydrate degradation; L-fucose degradation; L-lactaldehyde and glycerone phosphate from L-fucose: step 1/3.</text>
</comment>
<comment type="subunit">
    <text evidence="1">Homohexamer.</text>
</comment>
<comment type="subcellular location">
    <subcellularLocation>
        <location evidence="1">Cytoplasm</location>
    </subcellularLocation>
</comment>
<comment type="similarity">
    <text evidence="1">Belongs to the L-fucose isomerase family.</text>
</comment>
<keyword id="KW-0119">Carbohydrate metabolism</keyword>
<keyword id="KW-0963">Cytoplasm</keyword>
<keyword id="KW-0294">Fucose metabolism</keyword>
<keyword id="KW-0413">Isomerase</keyword>
<keyword id="KW-0464">Manganese</keyword>
<keyword id="KW-0479">Metal-binding</keyword>
<keyword id="KW-1185">Reference proteome</keyword>
<dbReference type="EC" id="5.3.1.25" evidence="1"/>
<dbReference type="EMBL" id="CP000822">
    <property type="protein sequence ID" value="ABV15226.1"/>
    <property type="molecule type" value="Genomic_DNA"/>
</dbReference>
<dbReference type="RefSeq" id="WP_012134915.1">
    <property type="nucleotide sequence ID" value="NC_009792.1"/>
</dbReference>
<dbReference type="SMR" id="A8AP13"/>
<dbReference type="STRING" id="290338.CKO_04161"/>
<dbReference type="GeneID" id="45137789"/>
<dbReference type="KEGG" id="cko:CKO_04161"/>
<dbReference type="HOGENOM" id="CLU_033326_1_0_6"/>
<dbReference type="OrthoDB" id="9760430at2"/>
<dbReference type="UniPathway" id="UPA00563">
    <property type="reaction ID" value="UER00624"/>
</dbReference>
<dbReference type="Proteomes" id="UP000008148">
    <property type="component" value="Chromosome"/>
</dbReference>
<dbReference type="GO" id="GO:0005737">
    <property type="term" value="C:cytoplasm"/>
    <property type="evidence" value="ECO:0007669"/>
    <property type="project" value="UniProtKB-SubCell"/>
</dbReference>
<dbReference type="GO" id="GO:0008790">
    <property type="term" value="F:arabinose isomerase activity"/>
    <property type="evidence" value="ECO:0007669"/>
    <property type="project" value="TreeGrafter"/>
</dbReference>
<dbReference type="GO" id="GO:0008736">
    <property type="term" value="F:L-fucose isomerase activity"/>
    <property type="evidence" value="ECO:0007669"/>
    <property type="project" value="UniProtKB-UniRule"/>
</dbReference>
<dbReference type="GO" id="GO:0030145">
    <property type="term" value="F:manganese ion binding"/>
    <property type="evidence" value="ECO:0007669"/>
    <property type="project" value="UniProtKB-UniRule"/>
</dbReference>
<dbReference type="GO" id="GO:0019571">
    <property type="term" value="P:D-arabinose catabolic process"/>
    <property type="evidence" value="ECO:0007669"/>
    <property type="project" value="TreeGrafter"/>
</dbReference>
<dbReference type="GO" id="GO:0042355">
    <property type="term" value="P:L-fucose catabolic process"/>
    <property type="evidence" value="ECO:0007669"/>
    <property type="project" value="UniProtKB-UniRule"/>
</dbReference>
<dbReference type="FunFam" id="3.20.14.10:FF:000001">
    <property type="entry name" value="L-fucose isomerase"/>
    <property type="match status" value="1"/>
</dbReference>
<dbReference type="FunFam" id="3.40.275.10:FF:000001">
    <property type="entry name" value="L-fucose isomerase"/>
    <property type="match status" value="1"/>
</dbReference>
<dbReference type="FunFam" id="3.40.50.1070:FF:000001">
    <property type="entry name" value="L-fucose isomerase"/>
    <property type="match status" value="1"/>
</dbReference>
<dbReference type="Gene3D" id="3.40.50.1070">
    <property type="match status" value="1"/>
</dbReference>
<dbReference type="Gene3D" id="3.40.275.10">
    <property type="entry name" value="L-fucose Isomerase, Chain A, domain 2"/>
    <property type="match status" value="1"/>
</dbReference>
<dbReference type="Gene3D" id="3.20.14.10">
    <property type="entry name" value="L-fucose/L-arabinose isomerase, C-terminal"/>
    <property type="match status" value="1"/>
</dbReference>
<dbReference type="HAMAP" id="MF_01254">
    <property type="entry name" value="Fucose_iso"/>
    <property type="match status" value="1"/>
</dbReference>
<dbReference type="InterPro" id="IPR004216">
    <property type="entry name" value="Fuc/Ara_isomerase_C"/>
</dbReference>
<dbReference type="InterPro" id="IPR038393">
    <property type="entry name" value="Fuc_iso_dom3_sf"/>
</dbReference>
<dbReference type="InterPro" id="IPR015888">
    <property type="entry name" value="Fuc_isomerase_C"/>
</dbReference>
<dbReference type="InterPro" id="IPR038391">
    <property type="entry name" value="Fucose_iso_dom1_sf"/>
</dbReference>
<dbReference type="InterPro" id="IPR012888">
    <property type="entry name" value="Fucose_iso_N1"/>
</dbReference>
<dbReference type="InterPro" id="IPR005763">
    <property type="entry name" value="Fucose_isomerase"/>
</dbReference>
<dbReference type="InterPro" id="IPR038392">
    <property type="entry name" value="Fucose_isomerase_dom2_sf"/>
</dbReference>
<dbReference type="InterPro" id="IPR009015">
    <property type="entry name" value="Fucose_isomerase_N/cen_sf"/>
</dbReference>
<dbReference type="InterPro" id="IPR012889">
    <property type="entry name" value="Fucose_isomerase_N2"/>
</dbReference>
<dbReference type="NCBIfam" id="TIGR01089">
    <property type="entry name" value="fucI"/>
    <property type="match status" value="1"/>
</dbReference>
<dbReference type="NCBIfam" id="NF008220">
    <property type="entry name" value="PRK10991.1"/>
    <property type="match status" value="1"/>
</dbReference>
<dbReference type="PANTHER" id="PTHR37840">
    <property type="entry name" value="L-FUCOSE ISOMERASE"/>
    <property type="match status" value="1"/>
</dbReference>
<dbReference type="PANTHER" id="PTHR37840:SF1">
    <property type="entry name" value="L-FUCOSE ISOMERASE"/>
    <property type="match status" value="1"/>
</dbReference>
<dbReference type="Pfam" id="PF02952">
    <property type="entry name" value="Fucose_iso_C"/>
    <property type="match status" value="1"/>
</dbReference>
<dbReference type="Pfam" id="PF07881">
    <property type="entry name" value="Fucose_iso_N1"/>
    <property type="match status" value="1"/>
</dbReference>
<dbReference type="Pfam" id="PF07882">
    <property type="entry name" value="Fucose_iso_N2"/>
    <property type="match status" value="1"/>
</dbReference>
<dbReference type="SUPFAM" id="SSF50443">
    <property type="entry name" value="FucI/AraA C-terminal domain-like"/>
    <property type="match status" value="1"/>
</dbReference>
<dbReference type="SUPFAM" id="SSF53743">
    <property type="entry name" value="FucI/AraA N-terminal and middle domains"/>
    <property type="match status" value="1"/>
</dbReference>
<reference key="1">
    <citation type="submission" date="2007-08" db="EMBL/GenBank/DDBJ databases">
        <authorList>
            <consortium name="The Citrobacter koseri Genome Sequencing Project"/>
            <person name="McClelland M."/>
            <person name="Sanderson E.K."/>
            <person name="Porwollik S."/>
            <person name="Spieth J."/>
            <person name="Clifton W.S."/>
            <person name="Latreille P."/>
            <person name="Courtney L."/>
            <person name="Wang C."/>
            <person name="Pepin K."/>
            <person name="Bhonagiri V."/>
            <person name="Nash W."/>
            <person name="Johnson M."/>
            <person name="Thiruvilangam P."/>
            <person name="Wilson R."/>
        </authorList>
    </citation>
    <scope>NUCLEOTIDE SEQUENCE [LARGE SCALE GENOMIC DNA]</scope>
    <source>
        <strain>ATCC BAA-895 / CDC 4225-83 / SGSC4696</strain>
    </source>
</reference>
<name>FUCI_CITK8</name>
<feature type="chain" id="PRO_1000067215" description="L-fucose isomerase">
    <location>
        <begin position="1"/>
        <end position="591"/>
    </location>
</feature>
<feature type="active site" description="Proton acceptor" evidence="1">
    <location>
        <position position="337"/>
    </location>
</feature>
<feature type="active site" description="Proton acceptor" evidence="1">
    <location>
        <position position="361"/>
    </location>
</feature>
<feature type="binding site" evidence="1">
    <location>
        <position position="337"/>
    </location>
    <ligand>
        <name>Mn(2+)</name>
        <dbReference type="ChEBI" id="CHEBI:29035"/>
    </ligand>
</feature>
<feature type="binding site" evidence="1">
    <location>
        <position position="361"/>
    </location>
    <ligand>
        <name>Mn(2+)</name>
        <dbReference type="ChEBI" id="CHEBI:29035"/>
    </ligand>
</feature>
<feature type="binding site" evidence="1">
    <location>
        <position position="528"/>
    </location>
    <ligand>
        <name>Mn(2+)</name>
        <dbReference type="ChEBI" id="CHEBI:29035"/>
    </ligand>
</feature>
<protein>
    <recommendedName>
        <fullName evidence="1">L-fucose isomerase</fullName>
        <ecNumber evidence="1">5.3.1.25</ecNumber>
    </recommendedName>
    <alternativeName>
        <fullName evidence="1">6-deoxy-L-galactose isomerase</fullName>
    </alternativeName>
    <alternativeName>
        <fullName>FucIase</fullName>
    </alternativeName>
</protein>
<accession>A8AP13</accession>
<sequence>MKKISLPKIGIRPVIDGRRMGVRESLEEQTMNMAKATAALITEKLRHACGAQIECVIADTCIAGMAESAACEEKFSSQNVGVTITVTPCWCYGSETIDMDPMRPKAIWGFNGTERPGAVYLAAALAAHSQKGIPAFSIYGHDVQDADDTSIPADVEEKLLRFARAGLAVASMKGKSYLSVGGVSMGIAGSIVDHNFFESWLGMKVQAVDMTELRRRIDQKIYDEAELEMALAWADKNFRYGEDQNAQQYKRNEEQSRAVLKESLLMAMCIRDMMQGNNKLAEKGLVEESLGYNAIAAGFQGQRHWTDQYPNGDTAEALLNSSFDWNGVREPFVVATENDSLNGVAMLLGHQLTGTAQVFADVRTYWSPEAVERVTGQPLTGLAEHGIIHLINSGSAALDGSCKQRDSEGKPTMKPHWEISQQEADACLAATEWCPAIHEYFRGGGYSSRFLTEGGVPFTMTRVNIIKGLGPVLQIAEGWSVELPKEMHDQLDARTNSTWPTTWFAPRLTGKGPFTDVYSVMANWGANHGVLTIGHVGADFITLAAMLRIPVCMHNVDDAKIYRPSAWAAHGMDIEGQDYRACQNYGPLYKR</sequence>
<organism>
    <name type="scientific">Citrobacter koseri (strain ATCC BAA-895 / CDC 4225-83 / SGSC4696)</name>
    <dbReference type="NCBI Taxonomy" id="290338"/>
    <lineage>
        <taxon>Bacteria</taxon>
        <taxon>Pseudomonadati</taxon>
        <taxon>Pseudomonadota</taxon>
        <taxon>Gammaproteobacteria</taxon>
        <taxon>Enterobacterales</taxon>
        <taxon>Enterobacteriaceae</taxon>
        <taxon>Citrobacter</taxon>
    </lineage>
</organism>
<proteinExistence type="inferred from homology"/>
<evidence type="ECO:0000255" key="1">
    <source>
        <dbReference type="HAMAP-Rule" id="MF_01254"/>
    </source>
</evidence>